<reference key="1">
    <citation type="submission" date="2006-08" db="EMBL/GenBank/DDBJ databases">
        <title>Complete sequence of Shewanella sp. MR-4.</title>
        <authorList>
            <consortium name="US DOE Joint Genome Institute"/>
            <person name="Copeland A."/>
            <person name="Lucas S."/>
            <person name="Lapidus A."/>
            <person name="Barry K."/>
            <person name="Detter J.C."/>
            <person name="Glavina del Rio T."/>
            <person name="Hammon N."/>
            <person name="Israni S."/>
            <person name="Dalin E."/>
            <person name="Tice H."/>
            <person name="Pitluck S."/>
            <person name="Kiss H."/>
            <person name="Brettin T."/>
            <person name="Bruce D."/>
            <person name="Han C."/>
            <person name="Tapia R."/>
            <person name="Gilna P."/>
            <person name="Schmutz J."/>
            <person name="Larimer F."/>
            <person name="Land M."/>
            <person name="Hauser L."/>
            <person name="Kyrpides N."/>
            <person name="Mikhailova N."/>
            <person name="Nealson K."/>
            <person name="Konstantinidis K."/>
            <person name="Klappenbach J."/>
            <person name="Tiedje J."/>
            <person name="Richardson P."/>
        </authorList>
    </citation>
    <scope>NUCLEOTIDE SEQUENCE [LARGE SCALE GENOMIC DNA]</scope>
    <source>
        <strain>MR-4</strain>
    </source>
</reference>
<evidence type="ECO:0000255" key="1">
    <source>
        <dbReference type="HAMAP-Rule" id="MF_00020"/>
    </source>
</evidence>
<gene>
    <name evidence="1" type="primary">ackA</name>
    <name type="ordered locus">Shewmr4_1491</name>
</gene>
<proteinExistence type="inferred from homology"/>
<dbReference type="EC" id="2.7.2.1" evidence="1"/>
<dbReference type="EMBL" id="CP000446">
    <property type="protein sequence ID" value="ABI38569.1"/>
    <property type="molecule type" value="Genomic_DNA"/>
</dbReference>
<dbReference type="RefSeq" id="WP_011622273.1">
    <property type="nucleotide sequence ID" value="NC_008321.1"/>
</dbReference>
<dbReference type="SMR" id="Q0HK48"/>
<dbReference type="GeneID" id="94727538"/>
<dbReference type="KEGG" id="she:Shewmr4_1491"/>
<dbReference type="HOGENOM" id="CLU_020352_0_1_6"/>
<dbReference type="UniPathway" id="UPA00340">
    <property type="reaction ID" value="UER00458"/>
</dbReference>
<dbReference type="GO" id="GO:0005829">
    <property type="term" value="C:cytosol"/>
    <property type="evidence" value="ECO:0007669"/>
    <property type="project" value="TreeGrafter"/>
</dbReference>
<dbReference type="GO" id="GO:0008776">
    <property type="term" value="F:acetate kinase activity"/>
    <property type="evidence" value="ECO:0007669"/>
    <property type="project" value="UniProtKB-UniRule"/>
</dbReference>
<dbReference type="GO" id="GO:0005524">
    <property type="term" value="F:ATP binding"/>
    <property type="evidence" value="ECO:0007669"/>
    <property type="project" value="UniProtKB-KW"/>
</dbReference>
<dbReference type="GO" id="GO:0000287">
    <property type="term" value="F:magnesium ion binding"/>
    <property type="evidence" value="ECO:0007669"/>
    <property type="project" value="UniProtKB-UniRule"/>
</dbReference>
<dbReference type="GO" id="GO:0006083">
    <property type="term" value="P:acetate metabolic process"/>
    <property type="evidence" value="ECO:0007669"/>
    <property type="project" value="TreeGrafter"/>
</dbReference>
<dbReference type="GO" id="GO:0006085">
    <property type="term" value="P:acetyl-CoA biosynthetic process"/>
    <property type="evidence" value="ECO:0007669"/>
    <property type="project" value="UniProtKB-UniRule"/>
</dbReference>
<dbReference type="CDD" id="cd24010">
    <property type="entry name" value="ASKHA_NBD_AcK_PK"/>
    <property type="match status" value="1"/>
</dbReference>
<dbReference type="FunFam" id="3.30.420.40:FF:000041">
    <property type="entry name" value="Acetate kinase"/>
    <property type="match status" value="1"/>
</dbReference>
<dbReference type="Gene3D" id="3.30.420.40">
    <property type="match status" value="2"/>
</dbReference>
<dbReference type="HAMAP" id="MF_00020">
    <property type="entry name" value="Acetate_kinase"/>
    <property type="match status" value="1"/>
</dbReference>
<dbReference type="InterPro" id="IPR004372">
    <property type="entry name" value="Ac/propionate_kinase"/>
</dbReference>
<dbReference type="InterPro" id="IPR000890">
    <property type="entry name" value="Aliphatic_acid_kin_short-chain"/>
</dbReference>
<dbReference type="InterPro" id="IPR023865">
    <property type="entry name" value="Aliphatic_acid_kinase_CS"/>
</dbReference>
<dbReference type="InterPro" id="IPR043129">
    <property type="entry name" value="ATPase_NBD"/>
</dbReference>
<dbReference type="NCBIfam" id="TIGR00016">
    <property type="entry name" value="ackA"/>
    <property type="match status" value="1"/>
</dbReference>
<dbReference type="PANTHER" id="PTHR21060">
    <property type="entry name" value="ACETATE KINASE"/>
    <property type="match status" value="1"/>
</dbReference>
<dbReference type="PANTHER" id="PTHR21060:SF21">
    <property type="entry name" value="ACETATE KINASE"/>
    <property type="match status" value="1"/>
</dbReference>
<dbReference type="Pfam" id="PF00871">
    <property type="entry name" value="Acetate_kinase"/>
    <property type="match status" value="1"/>
</dbReference>
<dbReference type="PIRSF" id="PIRSF000722">
    <property type="entry name" value="Acetate_prop_kin"/>
    <property type="match status" value="1"/>
</dbReference>
<dbReference type="PRINTS" id="PR00471">
    <property type="entry name" value="ACETATEKNASE"/>
</dbReference>
<dbReference type="SUPFAM" id="SSF53067">
    <property type="entry name" value="Actin-like ATPase domain"/>
    <property type="match status" value="2"/>
</dbReference>
<dbReference type="PROSITE" id="PS01075">
    <property type="entry name" value="ACETATE_KINASE_1"/>
    <property type="match status" value="1"/>
</dbReference>
<dbReference type="PROSITE" id="PS01076">
    <property type="entry name" value="ACETATE_KINASE_2"/>
    <property type="match status" value="1"/>
</dbReference>
<name>ACKA_SHESM</name>
<accession>Q0HK48</accession>
<sequence>MSNKLVLVLNCGSSSLKFAVIDAQTGDDQISGLAECFGLEDSRIKWKINGEKHESSLGAFTAHREAVEFIVNKILAGQPELAAQIQAVGHRIVHGGEKFTRSVIIDEHVIKGIEECSSLAPLHNPAHLIGIRAAIASFPKLPQVAVFDTAFHQSMPERAFIYALPYKLYREHGIRRYGMHGTSHLFVSREAAKVLNKPLEETNVICAHLGNGASVTAVKGGKSVDTSMGLTPLEGLVMGTRCGDLDPSIIYHLVHQLGYTLEEVNNLMNKQSGLLGISELTNDCRGIEEGYADGHKGATLALEIFCYRLAKYIASYTVPLGRLDAVVFTGGIGENSDIIREKVLNMLQIFNFHVDSERNKAARFGKKGIITTDNSTVAMVIPTNEEWVIAEDSIKLITK</sequence>
<feature type="chain" id="PRO_1000002258" description="Acetate kinase">
    <location>
        <begin position="1"/>
        <end position="399"/>
    </location>
</feature>
<feature type="active site" description="Proton donor/acceptor" evidence="1">
    <location>
        <position position="148"/>
    </location>
</feature>
<feature type="binding site" evidence="1">
    <location>
        <position position="10"/>
    </location>
    <ligand>
        <name>Mg(2+)</name>
        <dbReference type="ChEBI" id="CHEBI:18420"/>
    </ligand>
</feature>
<feature type="binding site" evidence="1">
    <location>
        <position position="17"/>
    </location>
    <ligand>
        <name>ATP</name>
        <dbReference type="ChEBI" id="CHEBI:30616"/>
    </ligand>
</feature>
<feature type="binding site" evidence="1">
    <location>
        <position position="91"/>
    </location>
    <ligand>
        <name>substrate</name>
    </ligand>
</feature>
<feature type="binding site" evidence="1">
    <location>
        <begin position="208"/>
        <end position="212"/>
    </location>
    <ligand>
        <name>ATP</name>
        <dbReference type="ChEBI" id="CHEBI:30616"/>
    </ligand>
</feature>
<feature type="binding site" evidence="1">
    <location>
        <begin position="283"/>
        <end position="285"/>
    </location>
    <ligand>
        <name>ATP</name>
        <dbReference type="ChEBI" id="CHEBI:30616"/>
    </ligand>
</feature>
<feature type="binding site" evidence="1">
    <location>
        <begin position="331"/>
        <end position="335"/>
    </location>
    <ligand>
        <name>ATP</name>
        <dbReference type="ChEBI" id="CHEBI:30616"/>
    </ligand>
</feature>
<feature type="binding site" evidence="1">
    <location>
        <position position="385"/>
    </location>
    <ligand>
        <name>Mg(2+)</name>
        <dbReference type="ChEBI" id="CHEBI:18420"/>
    </ligand>
</feature>
<feature type="site" description="Transition state stabilizer" evidence="1">
    <location>
        <position position="180"/>
    </location>
</feature>
<feature type="site" description="Transition state stabilizer" evidence="1">
    <location>
        <position position="241"/>
    </location>
</feature>
<organism>
    <name type="scientific">Shewanella sp. (strain MR-4)</name>
    <dbReference type="NCBI Taxonomy" id="60480"/>
    <lineage>
        <taxon>Bacteria</taxon>
        <taxon>Pseudomonadati</taxon>
        <taxon>Pseudomonadota</taxon>
        <taxon>Gammaproteobacteria</taxon>
        <taxon>Alteromonadales</taxon>
        <taxon>Shewanellaceae</taxon>
        <taxon>Shewanella</taxon>
    </lineage>
</organism>
<keyword id="KW-0067">ATP-binding</keyword>
<keyword id="KW-0963">Cytoplasm</keyword>
<keyword id="KW-0418">Kinase</keyword>
<keyword id="KW-0460">Magnesium</keyword>
<keyword id="KW-0479">Metal-binding</keyword>
<keyword id="KW-0547">Nucleotide-binding</keyword>
<keyword id="KW-0808">Transferase</keyword>
<protein>
    <recommendedName>
        <fullName evidence="1">Acetate kinase</fullName>
        <ecNumber evidence="1">2.7.2.1</ecNumber>
    </recommendedName>
    <alternativeName>
        <fullName evidence="1">Acetokinase</fullName>
    </alternativeName>
</protein>
<comment type="function">
    <text evidence="1">Catalyzes the formation of acetyl phosphate from acetate and ATP. Can also catalyze the reverse reaction.</text>
</comment>
<comment type="catalytic activity">
    <reaction evidence="1">
        <text>acetate + ATP = acetyl phosphate + ADP</text>
        <dbReference type="Rhea" id="RHEA:11352"/>
        <dbReference type="ChEBI" id="CHEBI:22191"/>
        <dbReference type="ChEBI" id="CHEBI:30089"/>
        <dbReference type="ChEBI" id="CHEBI:30616"/>
        <dbReference type="ChEBI" id="CHEBI:456216"/>
        <dbReference type="EC" id="2.7.2.1"/>
    </reaction>
</comment>
<comment type="cofactor">
    <cofactor evidence="1">
        <name>Mg(2+)</name>
        <dbReference type="ChEBI" id="CHEBI:18420"/>
    </cofactor>
    <cofactor evidence="1">
        <name>Mn(2+)</name>
        <dbReference type="ChEBI" id="CHEBI:29035"/>
    </cofactor>
    <text evidence="1">Mg(2+). Can also accept Mn(2+).</text>
</comment>
<comment type="pathway">
    <text evidence="1">Metabolic intermediate biosynthesis; acetyl-CoA biosynthesis; acetyl-CoA from acetate: step 1/2.</text>
</comment>
<comment type="subunit">
    <text evidence="1">Homodimer.</text>
</comment>
<comment type="subcellular location">
    <subcellularLocation>
        <location evidence="1">Cytoplasm</location>
    </subcellularLocation>
</comment>
<comment type="similarity">
    <text evidence="1">Belongs to the acetokinase family.</text>
</comment>